<feature type="chain" id="PRO_1000136926" description="Cell division protein ZapD">
    <location>
        <begin position="1"/>
        <end position="248"/>
    </location>
</feature>
<sequence>MNGLGMQKFEHPLNERTRIYLRIESLLRKLGHSADLTQPYEYQVFFSSLFHMLDILEQVQVKADLGKDLEKLRLQYRAWMNIEGVDQSALLSVLEQISQVHQNLMQTTRPGHSLKEDRFLSALKQRFFIPGGDCCFDLPALHHWLHLPLDVRCRNTHNWMSQLLSLSDALSLWLRLTRETARYTPQIARNGFMQSEMENSNLLRLEIPIDQGVYPMISGHKSRFALRFMSFETNKNCEKDIEFTLAVC</sequence>
<gene>
    <name evidence="1" type="primary">zapD</name>
    <name type="ordered locus">VSAL_I2634</name>
</gene>
<proteinExistence type="inferred from homology"/>
<name>ZAPD_ALISL</name>
<reference key="1">
    <citation type="journal article" date="2008" name="BMC Genomics">
        <title>The genome sequence of the fish pathogen Aliivibrio salmonicida strain LFI1238 shows extensive evidence of gene decay.</title>
        <authorList>
            <person name="Hjerde E."/>
            <person name="Lorentzen M.S."/>
            <person name="Holden M.T."/>
            <person name="Seeger K."/>
            <person name="Paulsen S."/>
            <person name="Bason N."/>
            <person name="Churcher C."/>
            <person name="Harris D."/>
            <person name="Norbertczak H."/>
            <person name="Quail M.A."/>
            <person name="Sanders S."/>
            <person name="Thurston S."/>
            <person name="Parkhill J."/>
            <person name="Willassen N.P."/>
            <person name="Thomson N.R."/>
        </authorList>
    </citation>
    <scope>NUCLEOTIDE SEQUENCE [LARGE SCALE GENOMIC DNA]</scope>
    <source>
        <strain>LFI1238</strain>
    </source>
</reference>
<protein>
    <recommendedName>
        <fullName evidence="1">Cell division protein ZapD</fullName>
    </recommendedName>
    <alternativeName>
        <fullName evidence="1">Z ring-associated protein D</fullName>
    </alternativeName>
</protein>
<dbReference type="EMBL" id="FM178379">
    <property type="protein sequence ID" value="CAQ80318.1"/>
    <property type="molecule type" value="Genomic_DNA"/>
</dbReference>
<dbReference type="RefSeq" id="WP_012551089.1">
    <property type="nucleotide sequence ID" value="NC_011312.1"/>
</dbReference>
<dbReference type="SMR" id="B6ELG5"/>
<dbReference type="KEGG" id="vsa:VSAL_I2634"/>
<dbReference type="eggNOG" id="COG4582">
    <property type="taxonomic scope" value="Bacteria"/>
</dbReference>
<dbReference type="HOGENOM" id="CLU_076303_0_0_6"/>
<dbReference type="Proteomes" id="UP000001730">
    <property type="component" value="Chromosome 1"/>
</dbReference>
<dbReference type="GO" id="GO:0032153">
    <property type="term" value="C:cell division site"/>
    <property type="evidence" value="ECO:0007669"/>
    <property type="project" value="TreeGrafter"/>
</dbReference>
<dbReference type="GO" id="GO:0005737">
    <property type="term" value="C:cytoplasm"/>
    <property type="evidence" value="ECO:0007669"/>
    <property type="project" value="UniProtKB-SubCell"/>
</dbReference>
<dbReference type="GO" id="GO:0000917">
    <property type="term" value="P:division septum assembly"/>
    <property type="evidence" value="ECO:0007669"/>
    <property type="project" value="UniProtKB-KW"/>
</dbReference>
<dbReference type="GO" id="GO:0043093">
    <property type="term" value="P:FtsZ-dependent cytokinesis"/>
    <property type="evidence" value="ECO:0007669"/>
    <property type="project" value="UniProtKB-UniRule"/>
</dbReference>
<dbReference type="Gene3D" id="1.10.3900.10">
    <property type="entry name" value="YacF-like"/>
    <property type="match status" value="1"/>
</dbReference>
<dbReference type="Gene3D" id="2.60.440.10">
    <property type="entry name" value="YacF-like domains"/>
    <property type="match status" value="1"/>
</dbReference>
<dbReference type="HAMAP" id="MF_01092">
    <property type="entry name" value="ZapD"/>
    <property type="match status" value="1"/>
</dbReference>
<dbReference type="InterPro" id="IPR009777">
    <property type="entry name" value="ZapD"/>
</dbReference>
<dbReference type="InterPro" id="IPR027462">
    <property type="entry name" value="ZapD_C"/>
</dbReference>
<dbReference type="InterPro" id="IPR036268">
    <property type="entry name" value="ZapD_sf"/>
</dbReference>
<dbReference type="NCBIfam" id="NF003655">
    <property type="entry name" value="PRK05287.1-3"/>
    <property type="match status" value="1"/>
</dbReference>
<dbReference type="PANTHER" id="PTHR39455">
    <property type="entry name" value="CELL DIVISION PROTEIN ZAPD"/>
    <property type="match status" value="1"/>
</dbReference>
<dbReference type="PANTHER" id="PTHR39455:SF1">
    <property type="entry name" value="CELL DIVISION PROTEIN ZAPD"/>
    <property type="match status" value="1"/>
</dbReference>
<dbReference type="Pfam" id="PF07072">
    <property type="entry name" value="ZapD"/>
    <property type="match status" value="1"/>
</dbReference>
<dbReference type="SUPFAM" id="SSF160950">
    <property type="entry name" value="YacF-like"/>
    <property type="match status" value="1"/>
</dbReference>
<accession>B6ELG5</accession>
<keyword id="KW-0131">Cell cycle</keyword>
<keyword id="KW-0132">Cell division</keyword>
<keyword id="KW-0963">Cytoplasm</keyword>
<keyword id="KW-0717">Septation</keyword>
<comment type="function">
    <text evidence="1">Cell division factor that enhances FtsZ-ring assembly. Directly interacts with FtsZ and promotes bundling of FtsZ protofilaments, with a reduction in FtsZ GTPase activity.</text>
</comment>
<comment type="subunit">
    <text evidence="1">Interacts with FtsZ.</text>
</comment>
<comment type="subcellular location">
    <subcellularLocation>
        <location evidence="1">Cytoplasm</location>
    </subcellularLocation>
    <text evidence="1">Localizes to mid-cell in an FtsZ-dependent manner.</text>
</comment>
<comment type="similarity">
    <text evidence="1">Belongs to the ZapD family.</text>
</comment>
<organism>
    <name type="scientific">Aliivibrio salmonicida (strain LFI1238)</name>
    <name type="common">Vibrio salmonicida (strain LFI1238)</name>
    <dbReference type="NCBI Taxonomy" id="316275"/>
    <lineage>
        <taxon>Bacteria</taxon>
        <taxon>Pseudomonadati</taxon>
        <taxon>Pseudomonadota</taxon>
        <taxon>Gammaproteobacteria</taxon>
        <taxon>Vibrionales</taxon>
        <taxon>Vibrionaceae</taxon>
        <taxon>Aliivibrio</taxon>
    </lineage>
</organism>
<evidence type="ECO:0000255" key="1">
    <source>
        <dbReference type="HAMAP-Rule" id="MF_01092"/>
    </source>
</evidence>